<dbReference type="EC" id="6.3.4.2" evidence="1"/>
<dbReference type="EMBL" id="CP000243">
    <property type="protein sequence ID" value="ABE08601.1"/>
    <property type="molecule type" value="Genomic_DNA"/>
</dbReference>
<dbReference type="RefSeq" id="WP_000210878.1">
    <property type="nucleotide sequence ID" value="NZ_CP064825.1"/>
</dbReference>
<dbReference type="SMR" id="Q1R7R3"/>
<dbReference type="MEROPS" id="C26.964"/>
<dbReference type="GeneID" id="93779218"/>
<dbReference type="KEGG" id="eci:UTI89_C3149"/>
<dbReference type="HOGENOM" id="CLU_011675_5_0_6"/>
<dbReference type="UniPathway" id="UPA00159">
    <property type="reaction ID" value="UER00277"/>
</dbReference>
<dbReference type="Proteomes" id="UP000001952">
    <property type="component" value="Chromosome"/>
</dbReference>
<dbReference type="GO" id="GO:0005829">
    <property type="term" value="C:cytosol"/>
    <property type="evidence" value="ECO:0007669"/>
    <property type="project" value="TreeGrafter"/>
</dbReference>
<dbReference type="GO" id="GO:0005524">
    <property type="term" value="F:ATP binding"/>
    <property type="evidence" value="ECO:0007669"/>
    <property type="project" value="UniProtKB-KW"/>
</dbReference>
<dbReference type="GO" id="GO:0003883">
    <property type="term" value="F:CTP synthase activity"/>
    <property type="evidence" value="ECO:0007669"/>
    <property type="project" value="UniProtKB-UniRule"/>
</dbReference>
<dbReference type="GO" id="GO:0004359">
    <property type="term" value="F:glutaminase activity"/>
    <property type="evidence" value="ECO:0007669"/>
    <property type="project" value="RHEA"/>
</dbReference>
<dbReference type="GO" id="GO:0042802">
    <property type="term" value="F:identical protein binding"/>
    <property type="evidence" value="ECO:0007669"/>
    <property type="project" value="TreeGrafter"/>
</dbReference>
<dbReference type="GO" id="GO:0046872">
    <property type="term" value="F:metal ion binding"/>
    <property type="evidence" value="ECO:0007669"/>
    <property type="project" value="UniProtKB-KW"/>
</dbReference>
<dbReference type="GO" id="GO:0044210">
    <property type="term" value="P:'de novo' CTP biosynthetic process"/>
    <property type="evidence" value="ECO:0007669"/>
    <property type="project" value="UniProtKB-UniRule"/>
</dbReference>
<dbReference type="GO" id="GO:0019856">
    <property type="term" value="P:pyrimidine nucleobase biosynthetic process"/>
    <property type="evidence" value="ECO:0007669"/>
    <property type="project" value="TreeGrafter"/>
</dbReference>
<dbReference type="CDD" id="cd03113">
    <property type="entry name" value="CTPS_N"/>
    <property type="match status" value="1"/>
</dbReference>
<dbReference type="CDD" id="cd01746">
    <property type="entry name" value="GATase1_CTP_Synthase"/>
    <property type="match status" value="1"/>
</dbReference>
<dbReference type="FunFam" id="3.40.50.300:FF:000009">
    <property type="entry name" value="CTP synthase"/>
    <property type="match status" value="1"/>
</dbReference>
<dbReference type="FunFam" id="3.40.50.880:FF:000002">
    <property type="entry name" value="CTP synthase"/>
    <property type="match status" value="1"/>
</dbReference>
<dbReference type="Gene3D" id="3.40.50.880">
    <property type="match status" value="1"/>
</dbReference>
<dbReference type="Gene3D" id="3.40.50.300">
    <property type="entry name" value="P-loop containing nucleotide triphosphate hydrolases"/>
    <property type="match status" value="1"/>
</dbReference>
<dbReference type="HAMAP" id="MF_01227">
    <property type="entry name" value="PyrG"/>
    <property type="match status" value="1"/>
</dbReference>
<dbReference type="InterPro" id="IPR029062">
    <property type="entry name" value="Class_I_gatase-like"/>
</dbReference>
<dbReference type="InterPro" id="IPR004468">
    <property type="entry name" value="CTP_synthase"/>
</dbReference>
<dbReference type="InterPro" id="IPR017456">
    <property type="entry name" value="CTP_synthase_N"/>
</dbReference>
<dbReference type="InterPro" id="IPR017926">
    <property type="entry name" value="GATASE"/>
</dbReference>
<dbReference type="InterPro" id="IPR033828">
    <property type="entry name" value="GATase1_CTP_Synthase"/>
</dbReference>
<dbReference type="InterPro" id="IPR027417">
    <property type="entry name" value="P-loop_NTPase"/>
</dbReference>
<dbReference type="NCBIfam" id="NF003792">
    <property type="entry name" value="PRK05380.1"/>
    <property type="match status" value="1"/>
</dbReference>
<dbReference type="NCBIfam" id="TIGR00337">
    <property type="entry name" value="PyrG"/>
    <property type="match status" value="1"/>
</dbReference>
<dbReference type="PANTHER" id="PTHR11550">
    <property type="entry name" value="CTP SYNTHASE"/>
    <property type="match status" value="1"/>
</dbReference>
<dbReference type="PANTHER" id="PTHR11550:SF0">
    <property type="entry name" value="CTP SYNTHASE-RELATED"/>
    <property type="match status" value="1"/>
</dbReference>
<dbReference type="Pfam" id="PF06418">
    <property type="entry name" value="CTP_synth_N"/>
    <property type="match status" value="1"/>
</dbReference>
<dbReference type="Pfam" id="PF00117">
    <property type="entry name" value="GATase"/>
    <property type="match status" value="1"/>
</dbReference>
<dbReference type="SUPFAM" id="SSF52317">
    <property type="entry name" value="Class I glutamine amidotransferase-like"/>
    <property type="match status" value="1"/>
</dbReference>
<dbReference type="SUPFAM" id="SSF52540">
    <property type="entry name" value="P-loop containing nucleoside triphosphate hydrolases"/>
    <property type="match status" value="1"/>
</dbReference>
<dbReference type="PROSITE" id="PS51273">
    <property type="entry name" value="GATASE_TYPE_1"/>
    <property type="match status" value="1"/>
</dbReference>
<evidence type="ECO:0000255" key="1">
    <source>
        <dbReference type="HAMAP-Rule" id="MF_01227"/>
    </source>
</evidence>
<protein>
    <recommendedName>
        <fullName evidence="1">CTP synthase</fullName>
        <ecNumber evidence="1">6.3.4.2</ecNumber>
    </recommendedName>
    <alternativeName>
        <fullName evidence="1">Cytidine 5'-triphosphate synthase</fullName>
    </alternativeName>
    <alternativeName>
        <fullName evidence="1">Cytidine triphosphate synthetase</fullName>
        <shortName evidence="1">CTP synthetase</shortName>
        <shortName evidence="1">CTPS</shortName>
    </alternativeName>
    <alternativeName>
        <fullName evidence="1">UTP--ammonia ligase</fullName>
    </alternativeName>
</protein>
<organism>
    <name type="scientific">Escherichia coli (strain UTI89 / UPEC)</name>
    <dbReference type="NCBI Taxonomy" id="364106"/>
    <lineage>
        <taxon>Bacteria</taxon>
        <taxon>Pseudomonadati</taxon>
        <taxon>Pseudomonadota</taxon>
        <taxon>Gammaproteobacteria</taxon>
        <taxon>Enterobacterales</taxon>
        <taxon>Enterobacteriaceae</taxon>
        <taxon>Escherichia</taxon>
    </lineage>
</organism>
<accession>Q1R7R3</accession>
<reference key="1">
    <citation type="journal article" date="2006" name="Proc. Natl. Acad. Sci. U.S.A.">
        <title>Identification of genes subject to positive selection in uropathogenic strains of Escherichia coli: a comparative genomics approach.</title>
        <authorList>
            <person name="Chen S.L."/>
            <person name="Hung C.-S."/>
            <person name="Xu J."/>
            <person name="Reigstad C.S."/>
            <person name="Magrini V."/>
            <person name="Sabo A."/>
            <person name="Blasiar D."/>
            <person name="Bieri T."/>
            <person name="Meyer R.R."/>
            <person name="Ozersky P."/>
            <person name="Armstrong J.R."/>
            <person name="Fulton R.S."/>
            <person name="Latreille J.P."/>
            <person name="Spieth J."/>
            <person name="Hooton T.M."/>
            <person name="Mardis E.R."/>
            <person name="Hultgren S.J."/>
            <person name="Gordon J.I."/>
        </authorList>
    </citation>
    <scope>NUCLEOTIDE SEQUENCE [LARGE SCALE GENOMIC DNA]</scope>
    <source>
        <strain>UTI89 / UPEC</strain>
    </source>
</reference>
<proteinExistence type="inferred from homology"/>
<keyword id="KW-0067">ATP-binding</keyword>
<keyword id="KW-0315">Glutamine amidotransferase</keyword>
<keyword id="KW-0436">Ligase</keyword>
<keyword id="KW-0460">Magnesium</keyword>
<keyword id="KW-0479">Metal-binding</keyword>
<keyword id="KW-0547">Nucleotide-binding</keyword>
<keyword id="KW-0665">Pyrimidine biosynthesis</keyword>
<comment type="function">
    <text evidence="1">Catalyzes the ATP-dependent amination of UTP to CTP with either L-glutamine or ammonia as the source of nitrogen. Regulates intracellular CTP levels through interactions with the four ribonucleotide triphosphates.</text>
</comment>
<comment type="catalytic activity">
    <reaction evidence="1">
        <text>UTP + L-glutamine + ATP + H2O = CTP + L-glutamate + ADP + phosphate + 2 H(+)</text>
        <dbReference type="Rhea" id="RHEA:26426"/>
        <dbReference type="ChEBI" id="CHEBI:15377"/>
        <dbReference type="ChEBI" id="CHEBI:15378"/>
        <dbReference type="ChEBI" id="CHEBI:29985"/>
        <dbReference type="ChEBI" id="CHEBI:30616"/>
        <dbReference type="ChEBI" id="CHEBI:37563"/>
        <dbReference type="ChEBI" id="CHEBI:43474"/>
        <dbReference type="ChEBI" id="CHEBI:46398"/>
        <dbReference type="ChEBI" id="CHEBI:58359"/>
        <dbReference type="ChEBI" id="CHEBI:456216"/>
        <dbReference type="EC" id="6.3.4.2"/>
    </reaction>
</comment>
<comment type="catalytic activity">
    <reaction evidence="1">
        <text>L-glutamine + H2O = L-glutamate + NH4(+)</text>
        <dbReference type="Rhea" id="RHEA:15889"/>
        <dbReference type="ChEBI" id="CHEBI:15377"/>
        <dbReference type="ChEBI" id="CHEBI:28938"/>
        <dbReference type="ChEBI" id="CHEBI:29985"/>
        <dbReference type="ChEBI" id="CHEBI:58359"/>
    </reaction>
</comment>
<comment type="catalytic activity">
    <reaction evidence="1">
        <text>UTP + NH4(+) + ATP = CTP + ADP + phosphate + 2 H(+)</text>
        <dbReference type="Rhea" id="RHEA:16597"/>
        <dbReference type="ChEBI" id="CHEBI:15378"/>
        <dbReference type="ChEBI" id="CHEBI:28938"/>
        <dbReference type="ChEBI" id="CHEBI:30616"/>
        <dbReference type="ChEBI" id="CHEBI:37563"/>
        <dbReference type="ChEBI" id="CHEBI:43474"/>
        <dbReference type="ChEBI" id="CHEBI:46398"/>
        <dbReference type="ChEBI" id="CHEBI:456216"/>
    </reaction>
</comment>
<comment type="activity regulation">
    <text evidence="1">Allosterically activated by GTP, when glutamine is the substrate; GTP has no effect on the reaction when ammonia is the substrate. The allosteric effector GTP functions by stabilizing the protein conformation that binds the tetrahedral intermediate(s) formed during glutamine hydrolysis. Inhibited by the product CTP, via allosteric rather than competitive inhibition.</text>
</comment>
<comment type="pathway">
    <text evidence="1">Pyrimidine metabolism; CTP biosynthesis via de novo pathway; CTP from UDP: step 2/2.</text>
</comment>
<comment type="subunit">
    <text evidence="1">Homotetramer.</text>
</comment>
<comment type="miscellaneous">
    <text evidence="1">CTPSs have evolved a hybrid strategy for distinguishing between UTP and CTP. The overlapping regions of the product feedback inhibitory and substrate sites recognize a common feature in both compounds, the triphosphate moiety. To differentiate isosteric substrate and product pyrimidine rings, an additional pocket far from the expected kinase/ligase catalytic site, specifically recognizes the cytosine and ribose portions of the product inhibitor.</text>
</comment>
<comment type="similarity">
    <text evidence="1">Belongs to the CTP synthase family.</text>
</comment>
<feature type="chain" id="PRO_0000266117" description="CTP synthase">
    <location>
        <begin position="1"/>
        <end position="545"/>
    </location>
</feature>
<feature type="domain" description="Glutamine amidotransferase type-1" evidence="1">
    <location>
        <begin position="291"/>
        <end position="542"/>
    </location>
</feature>
<feature type="region of interest" description="Amidoligase domain" evidence="1">
    <location>
        <begin position="1"/>
        <end position="266"/>
    </location>
</feature>
<feature type="active site" description="Nucleophile; for glutamine hydrolysis" evidence="1">
    <location>
        <position position="379"/>
    </location>
</feature>
<feature type="active site" evidence="1">
    <location>
        <position position="515"/>
    </location>
</feature>
<feature type="active site" evidence="1">
    <location>
        <position position="517"/>
    </location>
</feature>
<feature type="binding site" evidence="1">
    <location>
        <position position="14"/>
    </location>
    <ligand>
        <name>CTP</name>
        <dbReference type="ChEBI" id="CHEBI:37563"/>
        <note>allosteric inhibitor</note>
    </ligand>
</feature>
<feature type="binding site" evidence="1">
    <location>
        <position position="14"/>
    </location>
    <ligand>
        <name>UTP</name>
        <dbReference type="ChEBI" id="CHEBI:46398"/>
    </ligand>
</feature>
<feature type="binding site" evidence="1">
    <location>
        <begin position="15"/>
        <end position="20"/>
    </location>
    <ligand>
        <name>ATP</name>
        <dbReference type="ChEBI" id="CHEBI:30616"/>
    </ligand>
</feature>
<feature type="binding site" evidence="1">
    <location>
        <position position="72"/>
    </location>
    <ligand>
        <name>ATP</name>
        <dbReference type="ChEBI" id="CHEBI:30616"/>
    </ligand>
</feature>
<feature type="binding site" evidence="1">
    <location>
        <position position="72"/>
    </location>
    <ligand>
        <name>Mg(2+)</name>
        <dbReference type="ChEBI" id="CHEBI:18420"/>
    </ligand>
</feature>
<feature type="binding site" evidence="1">
    <location>
        <position position="140"/>
    </location>
    <ligand>
        <name>Mg(2+)</name>
        <dbReference type="ChEBI" id="CHEBI:18420"/>
    </ligand>
</feature>
<feature type="binding site" evidence="1">
    <location>
        <begin position="147"/>
        <end position="149"/>
    </location>
    <ligand>
        <name>CTP</name>
        <dbReference type="ChEBI" id="CHEBI:37563"/>
        <note>allosteric inhibitor</note>
    </ligand>
</feature>
<feature type="binding site" evidence="1">
    <location>
        <begin position="187"/>
        <end position="192"/>
    </location>
    <ligand>
        <name>CTP</name>
        <dbReference type="ChEBI" id="CHEBI:37563"/>
        <note>allosteric inhibitor</note>
    </ligand>
</feature>
<feature type="binding site" evidence="1">
    <location>
        <begin position="187"/>
        <end position="192"/>
    </location>
    <ligand>
        <name>UTP</name>
        <dbReference type="ChEBI" id="CHEBI:46398"/>
    </ligand>
</feature>
<feature type="binding site" evidence="1">
    <location>
        <position position="223"/>
    </location>
    <ligand>
        <name>CTP</name>
        <dbReference type="ChEBI" id="CHEBI:37563"/>
        <note>allosteric inhibitor</note>
    </ligand>
</feature>
<feature type="binding site" evidence="1">
    <location>
        <position position="223"/>
    </location>
    <ligand>
        <name>UTP</name>
        <dbReference type="ChEBI" id="CHEBI:46398"/>
    </ligand>
</feature>
<feature type="binding site" evidence="1">
    <location>
        <begin position="239"/>
        <end position="241"/>
    </location>
    <ligand>
        <name>ATP</name>
        <dbReference type="ChEBI" id="CHEBI:30616"/>
    </ligand>
</feature>
<feature type="binding site" evidence="1">
    <location>
        <position position="352"/>
    </location>
    <ligand>
        <name>L-glutamine</name>
        <dbReference type="ChEBI" id="CHEBI:58359"/>
    </ligand>
</feature>
<feature type="binding site" evidence="1">
    <location>
        <begin position="380"/>
        <end position="383"/>
    </location>
    <ligand>
        <name>L-glutamine</name>
        <dbReference type="ChEBI" id="CHEBI:58359"/>
    </ligand>
</feature>
<feature type="binding site" evidence="1">
    <location>
        <position position="403"/>
    </location>
    <ligand>
        <name>L-glutamine</name>
        <dbReference type="ChEBI" id="CHEBI:58359"/>
    </ligand>
</feature>
<feature type="binding site" evidence="1">
    <location>
        <position position="470"/>
    </location>
    <ligand>
        <name>L-glutamine</name>
        <dbReference type="ChEBI" id="CHEBI:58359"/>
    </ligand>
</feature>
<sequence>MTTNYIFVTGGVVSSLGKGIAAASLAAILEARGLNVTIMKLDPYINVDPGTMSPIQHGEVFVTEDGAETDLDLGHYERFIRTKMSRRNNFTTGRIYSDVLRKERRGDYLGATVQVIPHITNAIKERVLEGGEGHDVVLVEIGGTVGDIESLPFLEAIRQMAVEIGREHTLFMHLTLVPYMAASGEVKTKPTQHSVKELLSIGIQPDILICRSDRAVPANERAKIALFCNVPEKAVISLKDVDSIYKIPGLLKSQGLDDYICKRFSLNCPEANLSEWEQVIFEEANPVSEVTIGMVGKYIELPDAYKSVIEALKHGGLKNRVSVNIKLIDSQDVETRGVEILKGLDAILVPGGFGYRGVEGMITTARFARENNIPYLGICLGMQVALIDYARHVANMENANSTEFVPDCKYPVVALITEWRDENGNVEVRSEKSDLGGTMRLGAQQCQLVDDSLVRQLYNAPTIVERHRHRYEVNNMLLKQIEDAGLRVAGRSGDDQLVEIIEVPNHPWFVACQFHPEFTSTPRDGHPLFAGFVKAASEFQKRQAK</sequence>
<name>PYRG_ECOUT</name>
<gene>
    <name evidence="1" type="primary">pyrG</name>
    <name type="ordered locus">UTI89_C3149</name>
</gene>